<gene>
    <name evidence="1" type="primary">ilvC</name>
    <name type="ordered locus">Clim_0739</name>
</gene>
<name>ILVC_CHLL2</name>
<keyword id="KW-0028">Amino-acid biosynthesis</keyword>
<keyword id="KW-0100">Branched-chain amino acid biosynthesis</keyword>
<keyword id="KW-0460">Magnesium</keyword>
<keyword id="KW-0479">Metal-binding</keyword>
<keyword id="KW-0521">NADP</keyword>
<keyword id="KW-0560">Oxidoreductase</keyword>
<reference key="1">
    <citation type="submission" date="2008-05" db="EMBL/GenBank/DDBJ databases">
        <title>Complete sequence of Chlorobium limicola DSM 245.</title>
        <authorList>
            <consortium name="US DOE Joint Genome Institute"/>
            <person name="Lucas S."/>
            <person name="Copeland A."/>
            <person name="Lapidus A."/>
            <person name="Glavina del Rio T."/>
            <person name="Dalin E."/>
            <person name="Tice H."/>
            <person name="Bruce D."/>
            <person name="Goodwin L."/>
            <person name="Pitluck S."/>
            <person name="Schmutz J."/>
            <person name="Larimer F."/>
            <person name="Land M."/>
            <person name="Hauser L."/>
            <person name="Kyrpides N."/>
            <person name="Ovchinnikova G."/>
            <person name="Zhao F."/>
            <person name="Li T."/>
            <person name="Liu Z."/>
            <person name="Overmann J."/>
            <person name="Bryant D.A."/>
            <person name="Richardson P."/>
        </authorList>
    </citation>
    <scope>NUCLEOTIDE SEQUENCE [LARGE SCALE GENOMIC DNA]</scope>
    <source>
        <strain>DSM 245 / NBRC 103803 / 6330</strain>
    </source>
</reference>
<organism>
    <name type="scientific">Chlorobium limicola (strain DSM 245 / NBRC 103803 / 6330)</name>
    <dbReference type="NCBI Taxonomy" id="290315"/>
    <lineage>
        <taxon>Bacteria</taxon>
        <taxon>Pseudomonadati</taxon>
        <taxon>Chlorobiota</taxon>
        <taxon>Chlorobiia</taxon>
        <taxon>Chlorobiales</taxon>
        <taxon>Chlorobiaceae</taxon>
        <taxon>Chlorobium/Pelodictyon group</taxon>
        <taxon>Chlorobium</taxon>
    </lineage>
</organism>
<feature type="chain" id="PRO_1000190928" description="Ketol-acid reductoisomerase (NADP(+))">
    <location>
        <begin position="1"/>
        <end position="330"/>
    </location>
</feature>
<feature type="domain" description="KARI N-terminal Rossmann" evidence="2">
    <location>
        <begin position="1"/>
        <end position="181"/>
    </location>
</feature>
<feature type="domain" description="KARI C-terminal knotted" evidence="3">
    <location>
        <begin position="182"/>
        <end position="327"/>
    </location>
</feature>
<feature type="active site" evidence="1">
    <location>
        <position position="107"/>
    </location>
</feature>
<feature type="binding site" evidence="1">
    <location>
        <begin position="24"/>
        <end position="27"/>
    </location>
    <ligand>
        <name>NADP(+)</name>
        <dbReference type="ChEBI" id="CHEBI:58349"/>
    </ligand>
</feature>
<feature type="binding site" evidence="1">
    <location>
        <position position="47"/>
    </location>
    <ligand>
        <name>NADP(+)</name>
        <dbReference type="ChEBI" id="CHEBI:58349"/>
    </ligand>
</feature>
<feature type="binding site" evidence="1">
    <location>
        <position position="50"/>
    </location>
    <ligand>
        <name>NADP(+)</name>
        <dbReference type="ChEBI" id="CHEBI:58349"/>
    </ligand>
</feature>
<feature type="binding site" evidence="1">
    <location>
        <position position="52"/>
    </location>
    <ligand>
        <name>NADP(+)</name>
        <dbReference type="ChEBI" id="CHEBI:58349"/>
    </ligand>
</feature>
<feature type="binding site" evidence="1">
    <location>
        <begin position="82"/>
        <end position="85"/>
    </location>
    <ligand>
        <name>NADP(+)</name>
        <dbReference type="ChEBI" id="CHEBI:58349"/>
    </ligand>
</feature>
<feature type="binding site" evidence="1">
    <location>
        <position position="133"/>
    </location>
    <ligand>
        <name>NADP(+)</name>
        <dbReference type="ChEBI" id="CHEBI:58349"/>
    </ligand>
</feature>
<feature type="binding site" evidence="1">
    <location>
        <position position="190"/>
    </location>
    <ligand>
        <name>Mg(2+)</name>
        <dbReference type="ChEBI" id="CHEBI:18420"/>
        <label>1</label>
    </ligand>
</feature>
<feature type="binding site" evidence="1">
    <location>
        <position position="190"/>
    </location>
    <ligand>
        <name>Mg(2+)</name>
        <dbReference type="ChEBI" id="CHEBI:18420"/>
        <label>2</label>
    </ligand>
</feature>
<feature type="binding site" evidence="1">
    <location>
        <position position="194"/>
    </location>
    <ligand>
        <name>Mg(2+)</name>
        <dbReference type="ChEBI" id="CHEBI:18420"/>
        <label>1</label>
    </ligand>
</feature>
<feature type="binding site" evidence="1">
    <location>
        <position position="226"/>
    </location>
    <ligand>
        <name>Mg(2+)</name>
        <dbReference type="ChEBI" id="CHEBI:18420"/>
        <label>2</label>
    </ligand>
</feature>
<feature type="binding site" evidence="1">
    <location>
        <position position="230"/>
    </location>
    <ligand>
        <name>Mg(2+)</name>
        <dbReference type="ChEBI" id="CHEBI:18420"/>
        <label>2</label>
    </ligand>
</feature>
<feature type="binding site" evidence="1">
    <location>
        <position position="251"/>
    </location>
    <ligand>
        <name>substrate</name>
    </ligand>
</feature>
<sequence length="330" mass="36152">MNAYYEQDADLGYLQGKNIAILGYGSQGHAHALNLKESGLNVCVGLRPDSSSCDRAREAGLQVNTVAEAVKWADIVMVLLPDQYQKAIYETEIAPNLQPGNTLAFAHGFNIHYNQIVPDKSVNVIMIAPKSPGHLVRRTYTQGNGVPCLIAVHQDATGEARQQALAWAKGLGGTKAGVIETTFKNETETDLFGEQAVLCGGSAELIKAGFETLVEAGYPEELAYFECMHELKLIVDLYYEGGLSRMNFSVSDTAEYGGMTRGPRVITPAVKAEMKKILEEVQDGRFAKEFIDECNGGYKNLNRLRAENSGHAIEKVGSKLRDMMSWLIKK</sequence>
<accession>B3EHP0</accession>
<proteinExistence type="inferred from homology"/>
<protein>
    <recommendedName>
        <fullName evidence="1">Ketol-acid reductoisomerase (NADP(+))</fullName>
        <shortName evidence="1">KARI</shortName>
        <ecNumber evidence="1">1.1.1.86</ecNumber>
    </recommendedName>
    <alternativeName>
        <fullName evidence="1">Acetohydroxy-acid isomeroreductase</fullName>
        <shortName evidence="1">AHIR</shortName>
    </alternativeName>
    <alternativeName>
        <fullName evidence="1">Alpha-keto-beta-hydroxylacyl reductoisomerase</fullName>
    </alternativeName>
    <alternativeName>
        <fullName evidence="1">Ketol-acid reductoisomerase type 1</fullName>
    </alternativeName>
    <alternativeName>
        <fullName evidence="1">Ketol-acid reductoisomerase type I</fullName>
    </alternativeName>
</protein>
<dbReference type="EC" id="1.1.1.86" evidence="1"/>
<dbReference type="EMBL" id="CP001097">
    <property type="protein sequence ID" value="ACD89820.1"/>
    <property type="molecule type" value="Genomic_DNA"/>
</dbReference>
<dbReference type="RefSeq" id="WP_012465700.1">
    <property type="nucleotide sequence ID" value="NC_010803.1"/>
</dbReference>
<dbReference type="SMR" id="B3EHP0"/>
<dbReference type="STRING" id="290315.Clim_0739"/>
<dbReference type="KEGG" id="cli:Clim_0739"/>
<dbReference type="eggNOG" id="COG0059">
    <property type="taxonomic scope" value="Bacteria"/>
</dbReference>
<dbReference type="HOGENOM" id="CLU_033821_0_1_10"/>
<dbReference type="OrthoDB" id="9804088at2"/>
<dbReference type="UniPathway" id="UPA00047">
    <property type="reaction ID" value="UER00056"/>
</dbReference>
<dbReference type="UniPathway" id="UPA00049">
    <property type="reaction ID" value="UER00060"/>
</dbReference>
<dbReference type="Proteomes" id="UP000008841">
    <property type="component" value="Chromosome"/>
</dbReference>
<dbReference type="GO" id="GO:0005829">
    <property type="term" value="C:cytosol"/>
    <property type="evidence" value="ECO:0007669"/>
    <property type="project" value="TreeGrafter"/>
</dbReference>
<dbReference type="GO" id="GO:0004455">
    <property type="term" value="F:ketol-acid reductoisomerase activity"/>
    <property type="evidence" value="ECO:0007669"/>
    <property type="project" value="UniProtKB-UniRule"/>
</dbReference>
<dbReference type="GO" id="GO:0000287">
    <property type="term" value="F:magnesium ion binding"/>
    <property type="evidence" value="ECO:0007669"/>
    <property type="project" value="UniProtKB-UniRule"/>
</dbReference>
<dbReference type="GO" id="GO:0050661">
    <property type="term" value="F:NADP binding"/>
    <property type="evidence" value="ECO:0007669"/>
    <property type="project" value="InterPro"/>
</dbReference>
<dbReference type="GO" id="GO:0009097">
    <property type="term" value="P:isoleucine biosynthetic process"/>
    <property type="evidence" value="ECO:0007669"/>
    <property type="project" value="UniProtKB-UniRule"/>
</dbReference>
<dbReference type="GO" id="GO:0009099">
    <property type="term" value="P:L-valine biosynthetic process"/>
    <property type="evidence" value="ECO:0007669"/>
    <property type="project" value="UniProtKB-UniRule"/>
</dbReference>
<dbReference type="FunFam" id="3.40.50.720:FF:000023">
    <property type="entry name" value="Ketol-acid reductoisomerase (NADP(+))"/>
    <property type="match status" value="1"/>
</dbReference>
<dbReference type="Gene3D" id="6.10.240.10">
    <property type="match status" value="1"/>
</dbReference>
<dbReference type="Gene3D" id="3.40.50.720">
    <property type="entry name" value="NAD(P)-binding Rossmann-like Domain"/>
    <property type="match status" value="1"/>
</dbReference>
<dbReference type="HAMAP" id="MF_00435">
    <property type="entry name" value="IlvC"/>
    <property type="match status" value="1"/>
</dbReference>
<dbReference type="InterPro" id="IPR008927">
    <property type="entry name" value="6-PGluconate_DH-like_C_sf"/>
</dbReference>
<dbReference type="InterPro" id="IPR013023">
    <property type="entry name" value="KARI"/>
</dbReference>
<dbReference type="InterPro" id="IPR000506">
    <property type="entry name" value="KARI_C"/>
</dbReference>
<dbReference type="InterPro" id="IPR013116">
    <property type="entry name" value="KARI_N"/>
</dbReference>
<dbReference type="InterPro" id="IPR014359">
    <property type="entry name" value="KARI_prok"/>
</dbReference>
<dbReference type="InterPro" id="IPR036291">
    <property type="entry name" value="NAD(P)-bd_dom_sf"/>
</dbReference>
<dbReference type="NCBIfam" id="TIGR00465">
    <property type="entry name" value="ilvC"/>
    <property type="match status" value="1"/>
</dbReference>
<dbReference type="NCBIfam" id="NF004017">
    <property type="entry name" value="PRK05479.1"/>
    <property type="match status" value="1"/>
</dbReference>
<dbReference type="NCBIfam" id="NF009940">
    <property type="entry name" value="PRK13403.1"/>
    <property type="match status" value="1"/>
</dbReference>
<dbReference type="PANTHER" id="PTHR21371">
    <property type="entry name" value="KETOL-ACID REDUCTOISOMERASE, MITOCHONDRIAL"/>
    <property type="match status" value="1"/>
</dbReference>
<dbReference type="PANTHER" id="PTHR21371:SF1">
    <property type="entry name" value="KETOL-ACID REDUCTOISOMERASE, MITOCHONDRIAL"/>
    <property type="match status" value="1"/>
</dbReference>
<dbReference type="Pfam" id="PF01450">
    <property type="entry name" value="KARI_C"/>
    <property type="match status" value="1"/>
</dbReference>
<dbReference type="Pfam" id="PF07991">
    <property type="entry name" value="KARI_N"/>
    <property type="match status" value="1"/>
</dbReference>
<dbReference type="PIRSF" id="PIRSF000116">
    <property type="entry name" value="IlvC_gammaproteo"/>
    <property type="match status" value="1"/>
</dbReference>
<dbReference type="SUPFAM" id="SSF48179">
    <property type="entry name" value="6-phosphogluconate dehydrogenase C-terminal domain-like"/>
    <property type="match status" value="1"/>
</dbReference>
<dbReference type="SUPFAM" id="SSF51735">
    <property type="entry name" value="NAD(P)-binding Rossmann-fold domains"/>
    <property type="match status" value="1"/>
</dbReference>
<dbReference type="PROSITE" id="PS51851">
    <property type="entry name" value="KARI_C"/>
    <property type="match status" value="1"/>
</dbReference>
<dbReference type="PROSITE" id="PS51850">
    <property type="entry name" value="KARI_N"/>
    <property type="match status" value="1"/>
</dbReference>
<comment type="function">
    <text evidence="1">Involved in the biosynthesis of branched-chain amino acids (BCAA). Catalyzes an alkyl-migration followed by a ketol-acid reduction of (S)-2-acetolactate (S2AL) to yield (R)-2,3-dihydroxy-isovalerate. In the isomerase reaction, S2AL is rearranged via a Mg-dependent methyl migration to produce 3-hydroxy-3-methyl-2-ketobutyrate (HMKB). In the reductase reaction, this 2-ketoacid undergoes a metal-dependent reduction by NADPH to yield (R)-2,3-dihydroxy-isovalerate.</text>
</comment>
<comment type="catalytic activity">
    <reaction evidence="1">
        <text>(2R)-2,3-dihydroxy-3-methylbutanoate + NADP(+) = (2S)-2-acetolactate + NADPH + H(+)</text>
        <dbReference type="Rhea" id="RHEA:22068"/>
        <dbReference type="ChEBI" id="CHEBI:15378"/>
        <dbReference type="ChEBI" id="CHEBI:49072"/>
        <dbReference type="ChEBI" id="CHEBI:57783"/>
        <dbReference type="ChEBI" id="CHEBI:58349"/>
        <dbReference type="ChEBI" id="CHEBI:58476"/>
        <dbReference type="EC" id="1.1.1.86"/>
    </reaction>
</comment>
<comment type="catalytic activity">
    <reaction evidence="1">
        <text>(2R,3R)-2,3-dihydroxy-3-methylpentanoate + NADP(+) = (S)-2-ethyl-2-hydroxy-3-oxobutanoate + NADPH + H(+)</text>
        <dbReference type="Rhea" id="RHEA:13493"/>
        <dbReference type="ChEBI" id="CHEBI:15378"/>
        <dbReference type="ChEBI" id="CHEBI:49256"/>
        <dbReference type="ChEBI" id="CHEBI:49258"/>
        <dbReference type="ChEBI" id="CHEBI:57783"/>
        <dbReference type="ChEBI" id="CHEBI:58349"/>
        <dbReference type="EC" id="1.1.1.86"/>
    </reaction>
</comment>
<comment type="cofactor">
    <cofactor evidence="1">
        <name>Mg(2+)</name>
        <dbReference type="ChEBI" id="CHEBI:18420"/>
    </cofactor>
    <text evidence="1">Binds 2 magnesium ions per subunit.</text>
</comment>
<comment type="pathway">
    <text evidence="1">Amino-acid biosynthesis; L-isoleucine biosynthesis; L-isoleucine from 2-oxobutanoate: step 2/4.</text>
</comment>
<comment type="pathway">
    <text evidence="1">Amino-acid biosynthesis; L-valine biosynthesis; L-valine from pyruvate: step 2/4.</text>
</comment>
<comment type="similarity">
    <text evidence="1">Belongs to the ketol-acid reductoisomerase family.</text>
</comment>
<evidence type="ECO:0000255" key="1">
    <source>
        <dbReference type="HAMAP-Rule" id="MF_00435"/>
    </source>
</evidence>
<evidence type="ECO:0000255" key="2">
    <source>
        <dbReference type="PROSITE-ProRule" id="PRU01197"/>
    </source>
</evidence>
<evidence type="ECO:0000255" key="3">
    <source>
        <dbReference type="PROSITE-ProRule" id="PRU01198"/>
    </source>
</evidence>